<feature type="chain" id="PRO_1000061351" description="Ureidoglycolate lyase">
    <location>
        <begin position="1"/>
        <end position="160"/>
    </location>
</feature>
<organism>
    <name type="scientific">Escherichia coli O139:H28 (strain E24377A / ETEC)</name>
    <dbReference type="NCBI Taxonomy" id="331111"/>
    <lineage>
        <taxon>Bacteria</taxon>
        <taxon>Pseudomonadati</taxon>
        <taxon>Pseudomonadota</taxon>
        <taxon>Gammaproteobacteria</taxon>
        <taxon>Enterobacterales</taxon>
        <taxon>Enterobacteriaceae</taxon>
        <taxon>Escherichia</taxon>
    </lineage>
</organism>
<name>ALLA_ECO24</name>
<sequence length="160" mass="18249">MKLQVLPLSQEAFSAYGDVIETQQRDFFHINNGLVERYHDLALVEILEQDRTLISINRAQPANLPLTIYELERHPLGTQAFIPMKGEVFVVVVALGDDKPDLSTLRAFITNGEQGVNYHRNVWHHPLFAWQRVTDFLTIDRGGSDNCDVESIPEQELCFA</sequence>
<comment type="function">
    <text evidence="1">Catalyzes the catabolism of the allantoin degradation intermediate (S)-ureidoglycolate, generating urea and glyoxylate. Involved in the anaerobic utilization of allantoin as sole nitrogen source. Reinforces the induction of genes involved in the degradation of allantoin and glyoxylate by producing glyoxylate.</text>
</comment>
<comment type="catalytic activity">
    <reaction evidence="1">
        <text>(S)-ureidoglycolate = urea + glyoxylate</text>
        <dbReference type="Rhea" id="RHEA:11304"/>
        <dbReference type="ChEBI" id="CHEBI:16199"/>
        <dbReference type="ChEBI" id="CHEBI:36655"/>
        <dbReference type="ChEBI" id="CHEBI:57296"/>
        <dbReference type="EC" id="4.3.2.3"/>
    </reaction>
</comment>
<comment type="cofactor">
    <cofactor evidence="1">
        <name>Ni(2+)</name>
        <dbReference type="ChEBI" id="CHEBI:49786"/>
    </cofactor>
</comment>
<comment type="pathway">
    <text evidence="1">Nitrogen metabolism; (S)-allantoin degradation.</text>
</comment>
<comment type="subunit">
    <text evidence="1">Homodimer.</text>
</comment>
<comment type="similarity">
    <text evidence="1">Belongs to the ureidoglycolate lyase family.</text>
</comment>
<reference key="1">
    <citation type="journal article" date="2008" name="J. Bacteriol.">
        <title>The pangenome structure of Escherichia coli: comparative genomic analysis of E. coli commensal and pathogenic isolates.</title>
        <authorList>
            <person name="Rasko D.A."/>
            <person name="Rosovitz M.J."/>
            <person name="Myers G.S.A."/>
            <person name="Mongodin E.F."/>
            <person name="Fricke W.F."/>
            <person name="Gajer P."/>
            <person name="Crabtree J."/>
            <person name="Sebaihia M."/>
            <person name="Thomson N.R."/>
            <person name="Chaudhuri R."/>
            <person name="Henderson I.R."/>
            <person name="Sperandio V."/>
            <person name="Ravel J."/>
        </authorList>
    </citation>
    <scope>NUCLEOTIDE SEQUENCE [LARGE SCALE GENOMIC DNA]</scope>
    <source>
        <strain>E24377A / ETEC</strain>
    </source>
</reference>
<keyword id="KW-0456">Lyase</keyword>
<keyword id="KW-0659">Purine metabolism</keyword>
<keyword id="KW-1185">Reference proteome</keyword>
<gene>
    <name evidence="1" type="primary">allA</name>
    <name type="ordered locus">EcE24377A_0542</name>
</gene>
<proteinExistence type="inferred from homology"/>
<accession>A7ZIR2</accession>
<dbReference type="EC" id="4.3.2.3" evidence="1"/>
<dbReference type="EMBL" id="CP000800">
    <property type="protein sequence ID" value="ABV17202.1"/>
    <property type="molecule type" value="Genomic_DNA"/>
</dbReference>
<dbReference type="RefSeq" id="WP_000776392.1">
    <property type="nucleotide sequence ID" value="NC_009801.1"/>
</dbReference>
<dbReference type="SMR" id="A7ZIR2"/>
<dbReference type="KEGG" id="ecw:EcE24377A_0542"/>
<dbReference type="HOGENOM" id="CLU_070848_1_1_6"/>
<dbReference type="UniPathway" id="UPA00395"/>
<dbReference type="Proteomes" id="UP000001122">
    <property type="component" value="Chromosome"/>
</dbReference>
<dbReference type="GO" id="GO:0004848">
    <property type="term" value="F:ureidoglycolate hydrolase activity"/>
    <property type="evidence" value="ECO:0007669"/>
    <property type="project" value="InterPro"/>
</dbReference>
<dbReference type="GO" id="GO:0050385">
    <property type="term" value="F:ureidoglycolate lyase activity"/>
    <property type="evidence" value="ECO:0007669"/>
    <property type="project" value="UniProtKB-UniRule"/>
</dbReference>
<dbReference type="GO" id="GO:0000256">
    <property type="term" value="P:allantoin catabolic process"/>
    <property type="evidence" value="ECO:0007669"/>
    <property type="project" value="UniProtKB-UniRule"/>
</dbReference>
<dbReference type="GO" id="GO:0006145">
    <property type="term" value="P:purine nucleobase catabolic process"/>
    <property type="evidence" value="ECO:0007669"/>
    <property type="project" value="UniProtKB-UniRule"/>
</dbReference>
<dbReference type="CDD" id="cd20298">
    <property type="entry name" value="cupin_UAH"/>
    <property type="match status" value="1"/>
</dbReference>
<dbReference type="FunFam" id="2.60.120.480:FF:000001">
    <property type="entry name" value="Ureidoglycolate lyase"/>
    <property type="match status" value="1"/>
</dbReference>
<dbReference type="Gene3D" id="2.60.120.480">
    <property type="entry name" value="Ureidoglycolate hydrolase"/>
    <property type="match status" value="1"/>
</dbReference>
<dbReference type="HAMAP" id="MF_00616">
    <property type="entry name" value="Ureidogly_lyase"/>
    <property type="match status" value="1"/>
</dbReference>
<dbReference type="InterPro" id="IPR011051">
    <property type="entry name" value="RmlC_Cupin_sf"/>
</dbReference>
<dbReference type="InterPro" id="IPR047233">
    <property type="entry name" value="UAH_cupin"/>
</dbReference>
<dbReference type="InterPro" id="IPR007247">
    <property type="entry name" value="Ureidogly_lyase"/>
</dbReference>
<dbReference type="InterPro" id="IPR023525">
    <property type="entry name" value="Ureidogly_lyase_bac"/>
</dbReference>
<dbReference type="InterPro" id="IPR024060">
    <property type="entry name" value="Ureidoglycolate_lyase_dom_sf"/>
</dbReference>
<dbReference type="NCBIfam" id="NF002948">
    <property type="entry name" value="PRK03606.1-1"/>
    <property type="match status" value="1"/>
</dbReference>
<dbReference type="NCBIfam" id="NF009932">
    <property type="entry name" value="PRK13395.1"/>
    <property type="match status" value="1"/>
</dbReference>
<dbReference type="PANTHER" id="PTHR21221">
    <property type="entry name" value="UREIDOGLYCOLATE HYDROLASE"/>
    <property type="match status" value="1"/>
</dbReference>
<dbReference type="PANTHER" id="PTHR21221:SF1">
    <property type="entry name" value="UREIDOGLYCOLATE LYASE"/>
    <property type="match status" value="1"/>
</dbReference>
<dbReference type="Pfam" id="PF04115">
    <property type="entry name" value="Ureidogly_lyase"/>
    <property type="match status" value="1"/>
</dbReference>
<dbReference type="PIRSF" id="PIRSF017306">
    <property type="entry name" value="Ureidogly_hydro"/>
    <property type="match status" value="1"/>
</dbReference>
<dbReference type="SUPFAM" id="SSF51182">
    <property type="entry name" value="RmlC-like cupins"/>
    <property type="match status" value="1"/>
</dbReference>
<evidence type="ECO:0000255" key="1">
    <source>
        <dbReference type="HAMAP-Rule" id="MF_00616"/>
    </source>
</evidence>
<protein>
    <recommendedName>
        <fullName evidence="1">Ureidoglycolate lyase</fullName>
        <ecNumber evidence="1">4.3.2.3</ecNumber>
    </recommendedName>
    <alternativeName>
        <fullName evidence="1">Ureidoglycolatase</fullName>
    </alternativeName>
</protein>